<protein>
    <recommendedName>
        <fullName evidence="1">4-hydroxy-3-methylbut-2-en-1-yl diphosphate synthase (flavodoxin)</fullName>
        <ecNumber evidence="1">1.17.7.3</ecNumber>
    </recommendedName>
    <alternativeName>
        <fullName evidence="1">1-hydroxy-2-methyl-2-(E)-butenyl 4-diphosphate synthase</fullName>
    </alternativeName>
</protein>
<name>ISPG_RUMCH</name>
<comment type="function">
    <text evidence="1">Converts 2C-methyl-D-erythritol 2,4-cyclodiphosphate (ME-2,4cPP) into 1-hydroxy-2-methyl-2-(E)-butenyl 4-diphosphate.</text>
</comment>
<comment type="catalytic activity">
    <reaction evidence="1">
        <text>(2E)-4-hydroxy-3-methylbut-2-enyl diphosphate + oxidized [flavodoxin] + H2O + 2 H(+) = 2-C-methyl-D-erythritol 2,4-cyclic diphosphate + reduced [flavodoxin]</text>
        <dbReference type="Rhea" id="RHEA:43604"/>
        <dbReference type="Rhea" id="RHEA-COMP:10622"/>
        <dbReference type="Rhea" id="RHEA-COMP:10623"/>
        <dbReference type="ChEBI" id="CHEBI:15377"/>
        <dbReference type="ChEBI" id="CHEBI:15378"/>
        <dbReference type="ChEBI" id="CHEBI:57618"/>
        <dbReference type="ChEBI" id="CHEBI:58210"/>
        <dbReference type="ChEBI" id="CHEBI:58483"/>
        <dbReference type="ChEBI" id="CHEBI:128753"/>
        <dbReference type="EC" id="1.17.7.3"/>
    </reaction>
</comment>
<comment type="cofactor">
    <cofactor evidence="1">
        <name>[4Fe-4S] cluster</name>
        <dbReference type="ChEBI" id="CHEBI:49883"/>
    </cofactor>
    <text evidence="1">Binds 1 [4Fe-4S] cluster.</text>
</comment>
<comment type="pathway">
    <text evidence="1">Isoprenoid biosynthesis; isopentenyl diphosphate biosynthesis via DXP pathway; isopentenyl diphosphate from 1-deoxy-D-xylulose 5-phosphate: step 5/6.</text>
</comment>
<comment type="similarity">
    <text evidence="1">Belongs to the IspG family.</text>
</comment>
<gene>
    <name evidence="1" type="primary">ispG</name>
    <name type="ordered locus">Ccel_0451</name>
</gene>
<organism>
    <name type="scientific">Ruminiclostridium cellulolyticum (strain ATCC 35319 / DSM 5812 / JCM 6584 / H10)</name>
    <name type="common">Clostridium cellulolyticum</name>
    <dbReference type="NCBI Taxonomy" id="394503"/>
    <lineage>
        <taxon>Bacteria</taxon>
        <taxon>Bacillati</taxon>
        <taxon>Bacillota</taxon>
        <taxon>Clostridia</taxon>
        <taxon>Eubacteriales</taxon>
        <taxon>Oscillospiraceae</taxon>
        <taxon>Ruminiclostridium</taxon>
    </lineage>
</organism>
<reference key="1">
    <citation type="submission" date="2009-01" db="EMBL/GenBank/DDBJ databases">
        <title>Complete sequence of Clostridium cellulolyticum H10.</title>
        <authorList>
            <consortium name="US DOE Joint Genome Institute"/>
            <person name="Lucas S."/>
            <person name="Copeland A."/>
            <person name="Lapidus A."/>
            <person name="Glavina del Rio T."/>
            <person name="Dalin E."/>
            <person name="Tice H."/>
            <person name="Bruce D."/>
            <person name="Goodwin L."/>
            <person name="Pitluck S."/>
            <person name="Chertkov O."/>
            <person name="Saunders E."/>
            <person name="Brettin T."/>
            <person name="Detter J.C."/>
            <person name="Han C."/>
            <person name="Larimer F."/>
            <person name="Land M."/>
            <person name="Hauser L."/>
            <person name="Kyrpides N."/>
            <person name="Ivanova N."/>
            <person name="Zhou J."/>
            <person name="Richardson P."/>
        </authorList>
    </citation>
    <scope>NUCLEOTIDE SEQUENCE [LARGE SCALE GENOMIC DNA]</scope>
    <source>
        <strain>ATCC 35319 / DSM 5812 / JCM 6584 / H10</strain>
    </source>
</reference>
<feature type="chain" id="PRO_1000123440" description="4-hydroxy-3-methylbut-2-en-1-yl diphosphate synthase (flavodoxin)">
    <location>
        <begin position="1"/>
        <end position="353"/>
    </location>
</feature>
<feature type="binding site" evidence="1">
    <location>
        <position position="268"/>
    </location>
    <ligand>
        <name>[4Fe-4S] cluster</name>
        <dbReference type="ChEBI" id="CHEBI:49883"/>
    </ligand>
</feature>
<feature type="binding site" evidence="1">
    <location>
        <position position="271"/>
    </location>
    <ligand>
        <name>[4Fe-4S] cluster</name>
        <dbReference type="ChEBI" id="CHEBI:49883"/>
    </ligand>
</feature>
<feature type="binding site" evidence="1">
    <location>
        <position position="303"/>
    </location>
    <ligand>
        <name>[4Fe-4S] cluster</name>
        <dbReference type="ChEBI" id="CHEBI:49883"/>
    </ligand>
</feature>
<feature type="binding site" evidence="1">
    <location>
        <position position="310"/>
    </location>
    <ligand>
        <name>[4Fe-4S] cluster</name>
        <dbReference type="ChEBI" id="CHEBI:49883"/>
    </ligand>
</feature>
<accession>B8I6E1</accession>
<sequence length="353" mass="37931">MEDCIKRNQTKKIKVGDIFIGGDSPISVQSMTNTDTRDVKATIHQIKSLEEAGCDIVRLAILDNEAATAIGEIKKHVKIPLVADIHYDYRLAVECMKNGVDKIRLNPGNIGGNDRVRTVAGMAKERGIPIRIGVNSGSVEKRILEKFGGVTAEGMVESALAHVAMLENVDFNDIAISIKASSVPMTIAAYRLLSEKCLYPLHVGVTEAGTVYKGTIKSAVGIGCLLAEGIGDTIRVSLTGDPVEEIKVGKQILKSLDLLKEGIEIVSCPTCGRTQVNLIDIANSIEPLLEKLNKNIKVAIMGCAVNGPGEAKDADIGIAGGVNEVLLFKKGRIIRKIPQENVVEELIKEISEM</sequence>
<proteinExistence type="inferred from homology"/>
<evidence type="ECO:0000255" key="1">
    <source>
        <dbReference type="HAMAP-Rule" id="MF_00159"/>
    </source>
</evidence>
<dbReference type="EC" id="1.17.7.3" evidence="1"/>
<dbReference type="EMBL" id="CP001348">
    <property type="protein sequence ID" value="ACL74833.1"/>
    <property type="molecule type" value="Genomic_DNA"/>
</dbReference>
<dbReference type="RefSeq" id="WP_012634895.1">
    <property type="nucleotide sequence ID" value="NC_011898.1"/>
</dbReference>
<dbReference type="SMR" id="B8I6E1"/>
<dbReference type="STRING" id="394503.Ccel_0451"/>
<dbReference type="KEGG" id="cce:Ccel_0451"/>
<dbReference type="eggNOG" id="COG0821">
    <property type="taxonomic scope" value="Bacteria"/>
</dbReference>
<dbReference type="HOGENOM" id="CLU_042258_0_0_9"/>
<dbReference type="OrthoDB" id="9803214at2"/>
<dbReference type="UniPathway" id="UPA00056">
    <property type="reaction ID" value="UER00096"/>
</dbReference>
<dbReference type="Proteomes" id="UP000001349">
    <property type="component" value="Chromosome"/>
</dbReference>
<dbReference type="GO" id="GO:0051539">
    <property type="term" value="F:4 iron, 4 sulfur cluster binding"/>
    <property type="evidence" value="ECO:0007669"/>
    <property type="project" value="UniProtKB-UniRule"/>
</dbReference>
<dbReference type="GO" id="GO:0046429">
    <property type="term" value="F:4-hydroxy-3-methylbut-2-en-1-yl diphosphate synthase activity (ferredoxin)"/>
    <property type="evidence" value="ECO:0007669"/>
    <property type="project" value="UniProtKB-UniRule"/>
</dbReference>
<dbReference type="GO" id="GO:0141197">
    <property type="term" value="F:4-hydroxy-3-methylbut-2-enyl-diphosphate synthase activity (flavodoxin)"/>
    <property type="evidence" value="ECO:0007669"/>
    <property type="project" value="UniProtKB-EC"/>
</dbReference>
<dbReference type="GO" id="GO:0005506">
    <property type="term" value="F:iron ion binding"/>
    <property type="evidence" value="ECO:0007669"/>
    <property type="project" value="InterPro"/>
</dbReference>
<dbReference type="GO" id="GO:0019288">
    <property type="term" value="P:isopentenyl diphosphate biosynthetic process, methylerythritol 4-phosphate pathway"/>
    <property type="evidence" value="ECO:0007669"/>
    <property type="project" value="UniProtKB-UniRule"/>
</dbReference>
<dbReference type="GO" id="GO:0016114">
    <property type="term" value="P:terpenoid biosynthetic process"/>
    <property type="evidence" value="ECO:0007669"/>
    <property type="project" value="InterPro"/>
</dbReference>
<dbReference type="FunFam" id="3.20.20.20:FF:000001">
    <property type="entry name" value="4-hydroxy-3-methylbut-2-en-1-yl diphosphate synthase (flavodoxin)"/>
    <property type="match status" value="1"/>
</dbReference>
<dbReference type="Gene3D" id="3.20.20.20">
    <property type="entry name" value="Dihydropteroate synthase-like"/>
    <property type="match status" value="1"/>
</dbReference>
<dbReference type="Gene3D" id="3.30.413.10">
    <property type="entry name" value="Sulfite Reductase Hemoprotein, domain 1"/>
    <property type="match status" value="1"/>
</dbReference>
<dbReference type="HAMAP" id="MF_00159">
    <property type="entry name" value="IspG"/>
    <property type="match status" value="1"/>
</dbReference>
<dbReference type="InterPro" id="IPR011005">
    <property type="entry name" value="Dihydropteroate_synth-like_sf"/>
</dbReference>
<dbReference type="InterPro" id="IPR016425">
    <property type="entry name" value="IspG_bac"/>
</dbReference>
<dbReference type="InterPro" id="IPR004588">
    <property type="entry name" value="IspG_bac-typ"/>
</dbReference>
<dbReference type="InterPro" id="IPR045854">
    <property type="entry name" value="NO2/SO3_Rdtase_4Fe4S_sf"/>
</dbReference>
<dbReference type="NCBIfam" id="TIGR00612">
    <property type="entry name" value="ispG_gcpE"/>
    <property type="match status" value="1"/>
</dbReference>
<dbReference type="NCBIfam" id="NF001540">
    <property type="entry name" value="PRK00366.1"/>
    <property type="match status" value="1"/>
</dbReference>
<dbReference type="PANTHER" id="PTHR30454">
    <property type="entry name" value="4-HYDROXY-3-METHYLBUT-2-EN-1-YL DIPHOSPHATE SYNTHASE"/>
    <property type="match status" value="1"/>
</dbReference>
<dbReference type="PANTHER" id="PTHR30454:SF0">
    <property type="entry name" value="4-HYDROXY-3-METHYLBUT-2-EN-1-YL DIPHOSPHATE SYNTHASE (FERREDOXIN), CHLOROPLASTIC"/>
    <property type="match status" value="1"/>
</dbReference>
<dbReference type="Pfam" id="PF04551">
    <property type="entry name" value="GcpE"/>
    <property type="match status" value="1"/>
</dbReference>
<dbReference type="PIRSF" id="PIRSF004640">
    <property type="entry name" value="IspG"/>
    <property type="match status" value="1"/>
</dbReference>
<dbReference type="SUPFAM" id="SSF51717">
    <property type="entry name" value="Dihydropteroate synthetase-like"/>
    <property type="match status" value="1"/>
</dbReference>
<dbReference type="SUPFAM" id="SSF56014">
    <property type="entry name" value="Nitrite and sulphite reductase 4Fe-4S domain-like"/>
    <property type="match status" value="1"/>
</dbReference>
<keyword id="KW-0004">4Fe-4S</keyword>
<keyword id="KW-0408">Iron</keyword>
<keyword id="KW-0411">Iron-sulfur</keyword>
<keyword id="KW-0414">Isoprene biosynthesis</keyword>
<keyword id="KW-0479">Metal-binding</keyword>
<keyword id="KW-0560">Oxidoreductase</keyword>
<keyword id="KW-1185">Reference proteome</keyword>